<gene>
    <name type="primary">Grik5</name>
</gene>
<feature type="signal peptide" evidence="2">
    <location>
        <begin position="1"/>
        <end position="14"/>
    </location>
</feature>
<feature type="chain" id="PRO_0000011554" description="Glutamate receptor ionotropic, kainate 5">
    <location>
        <begin position="15"/>
        <end position="979"/>
    </location>
</feature>
<feature type="topological domain" description="Extracellular" evidence="2">
    <location>
        <begin position="15"/>
        <end position="544"/>
    </location>
</feature>
<feature type="transmembrane region" description="Helical" evidence="2">
    <location>
        <begin position="545"/>
        <end position="565"/>
    </location>
</feature>
<feature type="topological domain" description="Cytoplasmic" evidence="2">
    <location>
        <begin position="566"/>
        <end position="622"/>
    </location>
</feature>
<feature type="transmembrane region" description="Helical" evidence="2">
    <location>
        <begin position="623"/>
        <end position="643"/>
    </location>
</feature>
<feature type="topological domain" description="Extracellular" evidence="2">
    <location>
        <begin position="644"/>
        <end position="803"/>
    </location>
</feature>
<feature type="transmembrane region" description="Helical" evidence="2">
    <location>
        <begin position="804"/>
        <end position="824"/>
    </location>
</feature>
<feature type="topological domain" description="Cytoplasmic" evidence="2">
    <location>
        <begin position="825"/>
        <end position="979"/>
    </location>
</feature>
<feature type="region of interest" description="Disordered" evidence="3">
    <location>
        <begin position="856"/>
        <end position="875"/>
    </location>
</feature>
<feature type="region of interest" description="Disordered" evidence="3">
    <location>
        <begin position="890"/>
        <end position="925"/>
    </location>
</feature>
<feature type="region of interest" description="Disordered" evidence="3">
    <location>
        <begin position="942"/>
        <end position="979"/>
    </location>
</feature>
<feature type="compositionally biased region" description="Basic residues" evidence="3">
    <location>
        <begin position="856"/>
        <end position="867"/>
    </location>
</feature>
<feature type="compositionally biased region" description="Gly residues" evidence="3">
    <location>
        <begin position="894"/>
        <end position="903"/>
    </location>
</feature>
<feature type="compositionally biased region" description="Pro residues" evidence="3">
    <location>
        <begin position="912"/>
        <end position="923"/>
    </location>
</feature>
<feature type="glycosylation site" description="N-linked (GlcNAc...) asparagine" evidence="6">
    <location>
        <position position="219"/>
    </location>
</feature>
<feature type="glycosylation site" description="N-linked (GlcNAc...) asparagine" evidence="6">
    <location>
        <position position="271"/>
    </location>
</feature>
<feature type="glycosylation site" description="N-linked (GlcNAc...) asparagine" evidence="6">
    <location>
        <position position="285"/>
    </location>
</feature>
<feature type="glycosylation site" description="N-linked (GlcNAc...) asparagine" evidence="6">
    <location>
        <position position="322"/>
    </location>
</feature>
<feature type="glycosylation site" description="N-linked (GlcNAc...) asparagine" evidence="6">
    <location>
        <position position="372"/>
    </location>
</feature>
<feature type="glycosylation site" description="N-linked (GlcNAc...) asparagine" evidence="2">
    <location>
        <position position="394"/>
    </location>
</feature>
<feature type="glycosylation site" description="N-linked (GlcNAc...) asparagine" evidence="2">
    <location>
        <position position="400"/>
    </location>
</feature>
<feature type="glycosylation site" description="N-linked (GlcNAc...) asparagine" evidence="2">
    <location>
        <position position="407"/>
    </location>
</feature>
<feature type="glycosylation site" description="N-linked (GlcNAc...) asparagine" evidence="2">
    <location>
        <position position="414"/>
    </location>
</feature>
<feature type="glycosylation site" description="N-linked (GlcNAc...) asparagine" evidence="2">
    <location>
        <position position="478"/>
    </location>
</feature>
<feature type="glycosylation site" description="N-linked (GlcNAc...) asparagine" evidence="2">
    <location>
        <position position="735"/>
    </location>
</feature>
<feature type="disulfide bond" evidence="6 7">
    <location>
        <begin position="36"/>
        <end position="292"/>
    </location>
</feature>
<feature type="disulfide bond" evidence="6 7">
    <location>
        <begin position="83"/>
        <end position="334"/>
    </location>
</feature>
<feature type="disulfide bond" evidence="6 7">
    <location>
        <begin position="165"/>
        <end position="170"/>
    </location>
</feature>
<feature type="sequence conflict" description="In Ref. 2." evidence="12" ref="2">
    <original>N</original>
    <variation>G</variation>
    <location>
        <position position="887"/>
    </location>
</feature>
<feature type="sequence conflict" description="In Ref. 2." evidence="12" ref="2">
    <original>K</original>
    <variation>R</variation>
    <location>
        <position position="889"/>
    </location>
</feature>
<feature type="sequence conflict" description="In Ref. 2; AAA17831." evidence="12" ref="2">
    <original>D</original>
    <variation>N</variation>
    <location>
        <position position="910"/>
    </location>
</feature>
<feature type="strand" evidence="13">
    <location>
        <begin position="23"/>
        <end position="30"/>
    </location>
</feature>
<feature type="strand" evidence="14">
    <location>
        <begin position="34"/>
        <end position="37"/>
    </location>
</feature>
<feature type="helix" evidence="13">
    <location>
        <begin position="40"/>
        <end position="53"/>
    </location>
</feature>
<feature type="strand" evidence="13">
    <location>
        <begin position="62"/>
        <end position="69"/>
    </location>
</feature>
<feature type="strand" evidence="15">
    <location>
        <begin position="71"/>
        <end position="73"/>
    </location>
</feature>
<feature type="helix" evidence="13">
    <location>
        <begin position="75"/>
        <end position="85"/>
    </location>
</feature>
<feature type="helix" evidence="13">
    <location>
        <begin position="86"/>
        <end position="88"/>
    </location>
</feature>
<feature type="helix" evidence="13">
    <location>
        <begin position="100"/>
        <end position="113"/>
    </location>
</feature>
<feature type="strand" evidence="13">
    <location>
        <begin position="117"/>
        <end position="119"/>
    </location>
</feature>
<feature type="helix" evidence="14">
    <location>
        <begin position="129"/>
        <end position="134"/>
    </location>
</feature>
<feature type="strand" evidence="13">
    <location>
        <begin position="136"/>
        <end position="139"/>
    </location>
</feature>
<feature type="helix" evidence="13">
    <location>
        <begin position="142"/>
        <end position="155"/>
    </location>
</feature>
<feature type="strand" evidence="13">
    <location>
        <begin position="161"/>
        <end position="167"/>
    </location>
</feature>
<feature type="helix" evidence="13">
    <location>
        <begin position="170"/>
        <end position="173"/>
    </location>
</feature>
<feature type="helix" evidence="13">
    <location>
        <begin position="175"/>
        <end position="183"/>
    </location>
</feature>
<feature type="strand" evidence="13">
    <location>
        <begin position="184"/>
        <end position="186"/>
    </location>
</feature>
<feature type="strand" evidence="13">
    <location>
        <begin position="188"/>
        <end position="192"/>
    </location>
</feature>
<feature type="helix" evidence="13">
    <location>
        <begin position="200"/>
        <end position="209"/>
    </location>
</feature>
<feature type="strand" evidence="13">
    <location>
        <begin position="212"/>
        <end position="218"/>
    </location>
</feature>
<feature type="helix" evidence="13">
    <location>
        <begin position="220"/>
        <end position="232"/>
    </location>
</feature>
<feature type="turn" evidence="13">
    <location>
        <begin position="233"/>
        <end position="236"/>
    </location>
</feature>
<feature type="strand" evidence="15">
    <location>
        <begin position="237"/>
        <end position="239"/>
    </location>
</feature>
<feature type="strand" evidence="13">
    <location>
        <begin position="241"/>
        <end position="244"/>
    </location>
</feature>
<feature type="helix" evidence="13">
    <location>
        <begin position="249"/>
        <end position="251"/>
    </location>
</feature>
<feature type="turn" evidence="13">
    <location>
        <begin position="255"/>
        <end position="257"/>
    </location>
</feature>
<feature type="strand" evidence="13">
    <location>
        <begin position="263"/>
        <end position="268"/>
    </location>
</feature>
<feature type="helix" evidence="13">
    <location>
        <begin position="277"/>
        <end position="288"/>
    </location>
</feature>
<feature type="turn" evidence="13">
    <location>
        <begin position="289"/>
        <end position="291"/>
    </location>
</feature>
<feature type="helix" evidence="13">
    <location>
        <begin position="294"/>
        <end position="296"/>
    </location>
</feature>
<feature type="helix" evidence="13">
    <location>
        <begin position="302"/>
        <end position="321"/>
    </location>
</feature>
<feature type="turn" evidence="13">
    <location>
        <begin position="322"/>
        <end position="324"/>
    </location>
</feature>
<feature type="helix" evidence="13">
    <location>
        <begin position="343"/>
        <end position="350"/>
    </location>
</feature>
<feature type="strand" evidence="13">
    <location>
        <begin position="355"/>
        <end position="357"/>
    </location>
</feature>
<feature type="strand" evidence="13">
    <location>
        <begin position="360"/>
        <end position="362"/>
    </location>
</feature>
<feature type="strand" evidence="13">
    <location>
        <begin position="374"/>
        <end position="381"/>
    </location>
</feature>
<feature type="strand" evidence="13">
    <location>
        <begin position="384"/>
        <end position="392"/>
    </location>
</feature>
<reference key="1">
    <citation type="journal article" date="1992" name="Neuron">
        <title>The KA-2 subunit of excitatory amino acid receptors shows widespread expression in brain and forms ion channels with distantly related subunits.</title>
        <authorList>
            <person name="Herb A."/>
            <person name="Burnashev N."/>
            <person name="Werner P."/>
            <person name="Sakmann B."/>
            <person name="Wisden W."/>
            <person name="Seeburg P.H."/>
        </authorList>
    </citation>
    <scope>NUCLEOTIDE SEQUENCE [MRNA]</scope>
    <scope>FUNCTION</scope>
    <scope>SUBCELLULAR LOCATION</scope>
    <scope>TISSUE SPECIFICITY</scope>
    <scope>DEVELOPMENTAL STAGE</scope>
    <source>
        <tissue>Brain</tissue>
    </source>
</reference>
<reference key="2">
    <citation type="submission" date="1994-05" db="EMBL/GenBank/DDBJ databases">
        <authorList>
            <person name="Boulter J."/>
            <person name="Pecht G."/>
        </authorList>
    </citation>
    <scope>NUCLEOTIDE SEQUENCE [MRNA]</scope>
    <source>
        <strain>Sprague-Dawley</strain>
        <tissue>Brain</tissue>
    </source>
</reference>
<reference key="3">
    <citation type="journal article" date="1997" name="J. Neurosci.">
        <title>Glutamate receptor subunits GluR5 and KA-2 are coexpressed in rat trigeminal ganglion neurons.</title>
        <authorList>
            <person name="Sahara Y."/>
            <person name="Noro N."/>
            <person name="Iida Y."/>
            <person name="Soma K."/>
            <person name="Nakamura Y."/>
        </authorList>
    </citation>
    <scope>FUNCTION</scope>
    <scope>TISSUE SPECIFICITY</scope>
</reference>
<reference key="4">
    <citation type="journal article" date="1997" name="Neuron">
        <title>Rat GluR7 and a carboxy-terminal splice variant, GluR7b, are functional kainate receptor subunits with a low sensitivity to glutamate.</title>
        <authorList>
            <person name="Schiffer H.H."/>
            <person name="Swanson G.T."/>
            <person name="Heinemann S.F."/>
        </authorList>
    </citation>
    <scope>FUNCTION</scope>
    <scope>SUBUNIT</scope>
    <source>
        <strain>Sprague-Dawley</strain>
        <tissue>Brain</tissue>
    </source>
</reference>
<reference key="5">
    <citation type="journal article" date="2003" name="J. Neurosci.">
        <title>Distribution of kainate receptor subunits at hippocampal mossy fiber synapses.</title>
        <authorList>
            <person name="Darstein M."/>
            <person name="Petralia R.S."/>
            <person name="Swanson G.T."/>
            <person name="Wenthold R.J."/>
            <person name="Heinemann S.F."/>
        </authorList>
    </citation>
    <scope>SUBCELLULAR LOCATION</scope>
    <scope>TISSUE SPECIFICITY</scope>
</reference>
<reference key="6">
    <citation type="journal article" date="2012" name="Cell Rep.">
        <title>Assembly stoichiometry of the GluK2/GluK5 kainate receptor complex.</title>
        <authorList>
            <person name="Reiner A."/>
            <person name="Arant R.J."/>
            <person name="Isacoff E.Y."/>
        </authorList>
    </citation>
    <scope>SUBUNIT</scope>
    <scope>SUBCELLULAR LOCATION</scope>
</reference>
<reference key="7">
    <citation type="journal article" date="2014" name="Neuroscience">
        <title>Contributions of different kainate receptor subunits to the properties of recombinant homomeric and heteromeric receptors.</title>
        <authorList>
            <person name="Fisher M.T."/>
            <person name="Fisher J.L."/>
        </authorList>
    </citation>
    <scope>FUNCTION</scope>
    <scope>SUBUNIT</scope>
</reference>
<reference key="8">
    <citation type="journal article" date="2010" name="J. Mol. Biol.">
        <title>Crystal structures of the glutamate receptor ion channel GluK3 and GluK5 amino-terminal domains.</title>
        <authorList>
            <person name="Kumar J."/>
            <person name="Mayer M.L."/>
        </authorList>
    </citation>
    <scope>X-RAY CRYSTALLOGRAPHY (1.4 ANGSTROMS) OF 20-406</scope>
    <scope>GLYCOSYLATION AT ASN-219; ASN-271; ASN-285; ASN-322 AND ASN-372</scope>
    <scope>DISULFIDE BONDS</scope>
</reference>
<reference key="9">
    <citation type="journal article" date="2011" name="Neuron">
        <title>Structure and assembly mechanism for heteromeric kainate receptors.</title>
        <authorList>
            <person name="Kumar J."/>
            <person name="Schuck P."/>
            <person name="Mayer M.L."/>
        </authorList>
    </citation>
    <scope>X-RAY CRYSTALLOGRAPHY (2.91 ANGSTROMS) OF 20-406 IN COMPLEX WITH GRIK2</scope>
    <scope>DISULFIDE BONDS</scope>
    <scope>SUBUNIT</scope>
</reference>
<accession>Q63273</accession>
<accession>Q62643</accession>
<sequence>MPAELLLLLIVAFANPSCQVLSSLRMAAILDDQTVCGRGERLALALAREQINGIIEVPAKARVEVDIFELQRDSQYETTDTMCQILPKGVVSVLGPSSSPASASTVSHICGEKEIPHIKVGPEETPRLQYLRFASVSLYPSNEDVSLAVSRILKSFNYPSASLICAKAECLLRLEELVRGFLISKETLSVRMLDDSRDPTPLLKEIRDDKVSTIIIDANASISHLVLRKASELGMTSAFYKYILTTMDFPILHLDGIVEDSSNILGFSMFNTSHPFYPEFVRSLNMSWRENCEASTYPGPALSAALMFDAVHVVVSAVRELNRSQEIGVKPLACTSANIWPHGTSLMNYLRMVEYDGLTGRVEFNSKGQRTNYTLRILEKSRQGHREIGVWYSNRTLAMNATTLDINLSQTLANKTLVVTTILENPYVMRRPNFQALSGNERFEGFCVDMLRELAELLRFRYRLRLVEDGLYGAPEPNGSWTGMVGELINRKADLAVAAFTITAEREKVIDFSKPFMTLGISILYRVHMGRKPGYFSFLDPFSPAVWLFMLLAYLAVSCVLFLAARLSPYEWYNPHPCLRARPHILENQYTLGNSLWFPVGGFMQQGSEIMPRALSTRCVSGVWWAFTLIIISSYTANLAAFLTVQRMEVPVESADDLADQTNIEYGTIHAGSTMTFFQNSRYQTYQRMWNYMQSKQPSVFVKSTEEGIARVLNSRYAFLLESTMNEYHRRLNCNLTQIGGLLDTKGYGIGMPLGSPFRDEITLAILQLQENNRLEILKRKWWEGGRCPKEEDHRAKGLGMENIGGIFVVLICGLIIAVFVAVMEFIWSTRRSAESEEVSVCQEMLQELRHAVSCRKTSRSRRRRRPGGPSRALLSLRAVREMRLSNGKLYSAGAGGDAGAHGGPQRLLDDPGPPGGPRPQAPTPCTHVRVCQECRRIQALRASGAGAPPRGLGTPAEATSPPRPRPGPTGPRELTEHE</sequence>
<protein>
    <recommendedName>
        <fullName>Glutamate receptor ionotropic, kainate 5</fullName>
        <shortName>GluK5</shortName>
    </recommendedName>
    <alternativeName>
        <fullName>Glutamate receptor KA-2</fullName>
        <shortName>KA2</shortName>
    </alternativeName>
</protein>
<name>GRIK5_RAT</name>
<comment type="function">
    <text evidence="5 9 10 11">Ionotropic glutamate receptor that functions as a cation-permeable ligand-gated ion channel, gated by L-glutamate and the glutamatergic agonist kainic acid. Cannot form functional channels on its own and produces channel activity only in heteromeric assembly with GRIK1, GRIK2 and GRIK3 subunits.</text>
</comment>
<comment type="subunit">
    <text evidence="7 8 9 11">Homotetramer. Heterotetramer with GRIK2 (PubMed:21791290, PubMed:22509486). Can form functional heteromeric receptors with GRIK1, GRIK2 and GRIK3 (PubMed:25139762, PubMed:9390526).</text>
</comment>
<comment type="subcellular location">
    <subcellularLocation>
        <location evidence="5 8">Cell membrane</location>
        <topology evidence="2">Multi-pass membrane protein</topology>
    </subcellularLocation>
    <subcellularLocation>
        <location evidence="4">Postsynaptic cell membrane</location>
        <topology evidence="2">Multi-pass membrane protein</topology>
    </subcellularLocation>
    <subcellularLocation>
        <location evidence="1">Presynaptic cell membrane</location>
        <topology evidence="2">Multi-pass membrane protein</topology>
    </subcellularLocation>
    <text evidence="8">Association with GRIK2 is required for its cell membrane localization.</text>
</comment>
<comment type="tissue specificity">
    <text evidence="4 5 10">High expression in the cerebral cortex, pyriform cortex, caudate-putamen, hippocampal complex, medial habenulata and granule cell layer of the cerebellum. Weak expression in globus pallidus, thalamus, colliculi and the reticular thalamic nucleus. Expressed at high levels in the trigeminal ganglion neurons.</text>
</comment>
<comment type="developmental stage">
    <text evidence="5">From embryonic day 14 through postnatal day 1, high expression in spinal cord, brain and some areas of the PNS. At 17 dpc and 19 dpc, high expression in spinal cord, mesencephalon and telencephalic structures as in olfactory neurons and in nasal epithelium. Strong expression also in the pituitary.</text>
</comment>
<comment type="similarity">
    <text evidence="12">Belongs to the glutamate-gated ion channel (TC 1.A.10.1) family. GRIK5 subfamily.</text>
</comment>
<organism>
    <name type="scientific">Rattus norvegicus</name>
    <name type="common">Rat</name>
    <dbReference type="NCBI Taxonomy" id="10116"/>
    <lineage>
        <taxon>Eukaryota</taxon>
        <taxon>Metazoa</taxon>
        <taxon>Chordata</taxon>
        <taxon>Craniata</taxon>
        <taxon>Vertebrata</taxon>
        <taxon>Euteleostomi</taxon>
        <taxon>Mammalia</taxon>
        <taxon>Eutheria</taxon>
        <taxon>Euarchontoglires</taxon>
        <taxon>Glires</taxon>
        <taxon>Rodentia</taxon>
        <taxon>Myomorpha</taxon>
        <taxon>Muroidea</taxon>
        <taxon>Muridae</taxon>
        <taxon>Murinae</taxon>
        <taxon>Rattus</taxon>
    </lineage>
</organism>
<keyword id="KW-0002">3D-structure</keyword>
<keyword id="KW-1003">Cell membrane</keyword>
<keyword id="KW-0966">Cell projection</keyword>
<keyword id="KW-1015">Disulfide bond</keyword>
<keyword id="KW-0325">Glycoprotein</keyword>
<keyword id="KW-0407">Ion channel</keyword>
<keyword id="KW-0406">Ion transport</keyword>
<keyword id="KW-1071">Ligand-gated ion channel</keyword>
<keyword id="KW-0472">Membrane</keyword>
<keyword id="KW-0628">Postsynaptic cell membrane</keyword>
<keyword id="KW-0675">Receptor</keyword>
<keyword id="KW-1185">Reference proteome</keyword>
<keyword id="KW-0732">Signal</keyword>
<keyword id="KW-0770">Synapse</keyword>
<keyword id="KW-0812">Transmembrane</keyword>
<keyword id="KW-1133">Transmembrane helix</keyword>
<keyword id="KW-0813">Transport</keyword>
<dbReference type="EMBL" id="Z11581">
    <property type="protein sequence ID" value="CAA77667.1"/>
    <property type="molecule type" value="mRNA"/>
</dbReference>
<dbReference type="EMBL" id="U08258">
    <property type="protein sequence ID" value="AAA17831.1"/>
    <property type="molecule type" value="mRNA"/>
</dbReference>
<dbReference type="PIR" id="JH0592">
    <property type="entry name" value="JH0592"/>
</dbReference>
<dbReference type="RefSeq" id="NP_113696.1">
    <property type="nucleotide sequence ID" value="NM_031508.2"/>
</dbReference>
<dbReference type="PDB" id="3OM0">
    <property type="method" value="X-ray"/>
    <property type="resolution" value="1.40 A"/>
    <property type="chains" value="A=20-406"/>
</dbReference>
<dbReference type="PDB" id="3OM1">
    <property type="method" value="X-ray"/>
    <property type="resolution" value="1.68 A"/>
    <property type="chains" value="A/B=20-406"/>
</dbReference>
<dbReference type="PDB" id="3QLU">
    <property type="method" value="X-ray"/>
    <property type="resolution" value="2.91 A"/>
    <property type="chains" value="A/B=20-406"/>
</dbReference>
<dbReference type="PDB" id="3QLV">
    <property type="method" value="X-ray"/>
    <property type="resolution" value="3.94 A"/>
    <property type="chains" value="A/B/E/G/I=20-406"/>
</dbReference>
<dbReference type="PDB" id="7KS0">
    <property type="method" value="EM"/>
    <property type="resolution" value="5.30 A"/>
    <property type="chains" value="A/C=1-827"/>
</dbReference>
<dbReference type="PDB" id="7KS3">
    <property type="method" value="EM"/>
    <property type="resolution" value="5.80 A"/>
    <property type="chains" value="A/C=1-827"/>
</dbReference>
<dbReference type="PDBsum" id="3OM0"/>
<dbReference type="PDBsum" id="3OM1"/>
<dbReference type="PDBsum" id="3QLU"/>
<dbReference type="PDBsum" id="3QLV"/>
<dbReference type="PDBsum" id="7KS0"/>
<dbReference type="PDBsum" id="7KS3"/>
<dbReference type="SMR" id="Q63273"/>
<dbReference type="BioGRID" id="246572">
    <property type="interactions" value="2"/>
</dbReference>
<dbReference type="ComplexPortal" id="CPX-8603">
    <property type="entry name" value="GluK2-GluK5 glutamate ionotropic kainate-type receptor complex"/>
</dbReference>
<dbReference type="ComplexPortal" id="CPX-8608">
    <property type="entry name" value="GluK1-GluK3-GluK5 glutamate ionotropic kainate-type receptor complex"/>
</dbReference>
<dbReference type="ComplexPortal" id="CPX-8609">
    <property type="entry name" value="GluK1-GluK2-GluK5 glutamate ionotropic kainate-type receptor complex"/>
</dbReference>
<dbReference type="ComplexPortal" id="CPX-8610">
    <property type="entry name" value="GluK1-GluK2-GluK3-GluK5 glutamate ionotropic kainate-type receptor complex"/>
</dbReference>
<dbReference type="ComplexPortal" id="CPX-8612">
    <property type="entry name" value="GluK1-GluK5 glutamate ionotropic kainate-type receptor complex"/>
</dbReference>
<dbReference type="ComplexPortal" id="CPX-8615">
    <property type="entry name" value="GluK3-GluK5 glutamate ionotropic kainate-type receptor complex"/>
</dbReference>
<dbReference type="CORUM" id="Q63273"/>
<dbReference type="FunCoup" id="Q63273">
    <property type="interactions" value="665"/>
</dbReference>
<dbReference type="IntAct" id="Q63273">
    <property type="interactions" value="3"/>
</dbReference>
<dbReference type="STRING" id="10116.ENSRNOP00000027578"/>
<dbReference type="BindingDB" id="Q63273"/>
<dbReference type="ChEMBL" id="CHEMBL4041"/>
<dbReference type="DrugCentral" id="Q63273"/>
<dbReference type="GlyCosmos" id="Q63273">
    <property type="glycosylation" value="11 sites, No reported glycans"/>
</dbReference>
<dbReference type="GlyGen" id="Q63273">
    <property type="glycosylation" value="13 sites"/>
</dbReference>
<dbReference type="iPTMnet" id="Q63273"/>
<dbReference type="PhosphoSitePlus" id="Q63273"/>
<dbReference type="PaxDb" id="10116-ENSRNOP00000027578"/>
<dbReference type="ABCD" id="Q63273">
    <property type="antibodies" value="1 sequenced antibody"/>
</dbReference>
<dbReference type="GeneID" id="24407"/>
<dbReference type="KEGG" id="rno:24407"/>
<dbReference type="UCSC" id="RGD:2735">
    <property type="organism name" value="rat"/>
</dbReference>
<dbReference type="AGR" id="RGD:2735"/>
<dbReference type="CTD" id="2901"/>
<dbReference type="RGD" id="2735">
    <property type="gene designation" value="Grik5"/>
</dbReference>
<dbReference type="VEuPathDB" id="HostDB:ENSRNOG00000020310"/>
<dbReference type="eggNOG" id="KOG1052">
    <property type="taxonomic scope" value="Eukaryota"/>
</dbReference>
<dbReference type="HOGENOM" id="CLU_007257_1_0_1"/>
<dbReference type="InParanoid" id="Q63273"/>
<dbReference type="OrthoDB" id="5984008at2759"/>
<dbReference type="PhylomeDB" id="Q63273"/>
<dbReference type="TreeFam" id="TF334668"/>
<dbReference type="Reactome" id="R-RNO-451308">
    <property type="pathway name" value="Activation of Ca-permeable Kainate Receptor"/>
</dbReference>
<dbReference type="EvolutionaryTrace" id="Q63273"/>
<dbReference type="PRO" id="PR:Q63273"/>
<dbReference type="Proteomes" id="UP000002494">
    <property type="component" value="Chromosome 1"/>
</dbReference>
<dbReference type="Bgee" id="ENSRNOG00000020310">
    <property type="expression patterns" value="Expressed in frontal cortex and 20 other cell types or tissues"/>
</dbReference>
<dbReference type="GO" id="GO:0030424">
    <property type="term" value="C:axon"/>
    <property type="evidence" value="ECO:0000314"/>
    <property type="project" value="RGD"/>
</dbReference>
<dbReference type="GO" id="GO:0030425">
    <property type="term" value="C:dendrite"/>
    <property type="evidence" value="ECO:0000314"/>
    <property type="project" value="UniProtKB"/>
</dbReference>
<dbReference type="GO" id="GO:0005783">
    <property type="term" value="C:endoplasmic reticulum"/>
    <property type="evidence" value="ECO:0000266"/>
    <property type="project" value="RGD"/>
</dbReference>
<dbReference type="GO" id="GO:0098978">
    <property type="term" value="C:glutamatergic synapse"/>
    <property type="evidence" value="ECO:0000314"/>
    <property type="project" value="SynGO"/>
</dbReference>
<dbReference type="GO" id="GO:0098686">
    <property type="term" value="C:hippocampal mossy fiber to CA3 synapse"/>
    <property type="evidence" value="ECO:0000266"/>
    <property type="project" value="RGD"/>
</dbReference>
<dbReference type="GO" id="GO:0008328">
    <property type="term" value="C:ionotropic glutamate receptor complex"/>
    <property type="evidence" value="ECO:0000314"/>
    <property type="project" value="UniProtKB"/>
</dbReference>
<dbReference type="GO" id="GO:0032983">
    <property type="term" value="C:kainate selective glutamate receptor complex"/>
    <property type="evidence" value="ECO:0000266"/>
    <property type="project" value="RGD"/>
</dbReference>
<dbReference type="GO" id="GO:0016020">
    <property type="term" value="C:membrane"/>
    <property type="evidence" value="ECO:0000266"/>
    <property type="project" value="RGD"/>
</dbReference>
<dbReference type="GO" id="GO:0043025">
    <property type="term" value="C:neuronal cell body"/>
    <property type="evidence" value="ECO:0000314"/>
    <property type="project" value="RGD"/>
</dbReference>
<dbReference type="GO" id="GO:0043204">
    <property type="term" value="C:perikaryon"/>
    <property type="evidence" value="ECO:0000314"/>
    <property type="project" value="RGD"/>
</dbReference>
<dbReference type="GO" id="GO:0005886">
    <property type="term" value="C:plasma membrane"/>
    <property type="evidence" value="ECO:0000266"/>
    <property type="project" value="RGD"/>
</dbReference>
<dbReference type="GO" id="GO:0098839">
    <property type="term" value="C:postsynaptic density membrane"/>
    <property type="evidence" value="ECO:0000266"/>
    <property type="project" value="RGD"/>
</dbReference>
<dbReference type="GO" id="GO:0045211">
    <property type="term" value="C:postsynaptic membrane"/>
    <property type="evidence" value="ECO:0000314"/>
    <property type="project" value="SynGO"/>
</dbReference>
<dbReference type="GO" id="GO:0042734">
    <property type="term" value="C:presynaptic membrane"/>
    <property type="evidence" value="ECO:0000314"/>
    <property type="project" value="SynGO"/>
</dbReference>
<dbReference type="GO" id="GO:0043195">
    <property type="term" value="C:terminal bouton"/>
    <property type="evidence" value="ECO:0000314"/>
    <property type="project" value="RGD"/>
</dbReference>
<dbReference type="GO" id="GO:0008066">
    <property type="term" value="F:glutamate receptor activity"/>
    <property type="evidence" value="ECO:0000314"/>
    <property type="project" value="UniProtKB"/>
</dbReference>
<dbReference type="GO" id="GO:0042802">
    <property type="term" value="F:identical protein binding"/>
    <property type="evidence" value="ECO:0000353"/>
    <property type="project" value="UniProtKB"/>
</dbReference>
<dbReference type="GO" id="GO:0015277">
    <property type="term" value="F:kainate selective glutamate receptor activity"/>
    <property type="evidence" value="ECO:0000314"/>
    <property type="project" value="RGD"/>
</dbReference>
<dbReference type="GO" id="GO:0099507">
    <property type="term" value="F:ligand-gated monoatomic ion channel activity involved in regulation of presynaptic membrane potential"/>
    <property type="evidence" value="ECO:0000266"/>
    <property type="project" value="RGD"/>
</dbReference>
<dbReference type="GO" id="GO:0030165">
    <property type="term" value="F:PDZ domain binding"/>
    <property type="evidence" value="ECO:0000353"/>
    <property type="project" value="UniProtKB"/>
</dbReference>
<dbReference type="GO" id="GO:0017124">
    <property type="term" value="F:SH3 domain binding"/>
    <property type="evidence" value="ECO:0000315"/>
    <property type="project" value="UniProtKB"/>
</dbReference>
<dbReference type="GO" id="GO:1904315">
    <property type="term" value="F:transmitter-gated monoatomic ion channel activity involved in regulation of postsynaptic membrane potential"/>
    <property type="evidence" value="ECO:0000266"/>
    <property type="project" value="RGD"/>
</dbReference>
<dbReference type="GO" id="GO:0071333">
    <property type="term" value="P:cellular response to glucose stimulus"/>
    <property type="evidence" value="ECO:0000270"/>
    <property type="project" value="RGD"/>
</dbReference>
<dbReference type="GO" id="GO:0007268">
    <property type="term" value="P:chemical synaptic transmission"/>
    <property type="evidence" value="ECO:0000314"/>
    <property type="project" value="RGD"/>
</dbReference>
<dbReference type="GO" id="GO:0051649">
    <property type="term" value="P:establishment of localization in cell"/>
    <property type="evidence" value="ECO:0000315"/>
    <property type="project" value="UniProtKB"/>
</dbReference>
<dbReference type="GO" id="GO:0060079">
    <property type="term" value="P:excitatory postsynaptic potential"/>
    <property type="evidence" value="ECO:0000266"/>
    <property type="project" value="RGD"/>
</dbReference>
<dbReference type="GO" id="GO:0050804">
    <property type="term" value="P:modulation of chemical synaptic transmission"/>
    <property type="evidence" value="ECO:0000318"/>
    <property type="project" value="GO_Central"/>
</dbReference>
<dbReference type="GO" id="GO:0043525">
    <property type="term" value="P:positive regulation of neuron apoptotic process"/>
    <property type="evidence" value="ECO:0000315"/>
    <property type="project" value="RGD"/>
</dbReference>
<dbReference type="GO" id="GO:0006621">
    <property type="term" value="P:protein retention in ER lumen"/>
    <property type="evidence" value="ECO:0000315"/>
    <property type="project" value="UniProtKB"/>
</dbReference>
<dbReference type="GO" id="GO:0043113">
    <property type="term" value="P:receptor clustering"/>
    <property type="evidence" value="ECO:0000314"/>
    <property type="project" value="UniProtKB"/>
</dbReference>
<dbReference type="GO" id="GO:0042391">
    <property type="term" value="P:regulation of membrane potential"/>
    <property type="evidence" value="ECO:0000266"/>
    <property type="project" value="RGD"/>
</dbReference>
<dbReference type="GO" id="GO:0031630">
    <property type="term" value="P:regulation of synaptic vesicle fusion to presynaptic active zone membrane"/>
    <property type="evidence" value="ECO:0000266"/>
    <property type="project" value="RGD"/>
</dbReference>
<dbReference type="GO" id="GO:0035249">
    <property type="term" value="P:synaptic transmission, glutamatergic"/>
    <property type="evidence" value="ECO:0000266"/>
    <property type="project" value="RGD"/>
</dbReference>
<dbReference type="CDD" id="cd06394">
    <property type="entry name" value="PBP1_iGluR_Kainate_KA1_2"/>
    <property type="match status" value="1"/>
</dbReference>
<dbReference type="FunFam" id="3.40.190.10:FF:000060">
    <property type="entry name" value="Glutamate receptor ionotropic, kainate 1"/>
    <property type="match status" value="1"/>
</dbReference>
<dbReference type="FunFam" id="3.40.190.10:FF:000072">
    <property type="entry name" value="glutamate receptor ionotropic, kainate 4"/>
    <property type="match status" value="1"/>
</dbReference>
<dbReference type="FunFam" id="3.40.50.2300:FF:000059">
    <property type="entry name" value="Glutamate receptor, ionotropic, kainate 4"/>
    <property type="match status" value="1"/>
</dbReference>
<dbReference type="FunFam" id="1.10.287.70:FF:000010">
    <property type="entry name" value="Putative glutamate receptor ionotropic kainate 1"/>
    <property type="match status" value="1"/>
</dbReference>
<dbReference type="Gene3D" id="1.10.287.70">
    <property type="match status" value="1"/>
</dbReference>
<dbReference type="Gene3D" id="3.40.50.2300">
    <property type="match status" value="2"/>
</dbReference>
<dbReference type="Gene3D" id="3.40.190.10">
    <property type="entry name" value="Periplasmic binding protein-like II"/>
    <property type="match status" value="1"/>
</dbReference>
<dbReference type="InterPro" id="IPR001828">
    <property type="entry name" value="ANF_lig-bd_rcpt"/>
</dbReference>
<dbReference type="InterPro" id="IPR019594">
    <property type="entry name" value="Glu/Gly-bd"/>
</dbReference>
<dbReference type="InterPro" id="IPR001508">
    <property type="entry name" value="Iono_Glu_rcpt_met"/>
</dbReference>
<dbReference type="InterPro" id="IPR015683">
    <property type="entry name" value="Ionotropic_Glu_rcpt"/>
</dbReference>
<dbReference type="InterPro" id="IPR001320">
    <property type="entry name" value="Iontro_rcpt_C"/>
</dbReference>
<dbReference type="InterPro" id="IPR028082">
    <property type="entry name" value="Peripla_BP_I"/>
</dbReference>
<dbReference type="PANTHER" id="PTHR18966">
    <property type="entry name" value="IONOTROPIC GLUTAMATE RECEPTOR"/>
    <property type="match status" value="1"/>
</dbReference>
<dbReference type="Pfam" id="PF01094">
    <property type="entry name" value="ANF_receptor"/>
    <property type="match status" value="1"/>
</dbReference>
<dbReference type="Pfam" id="PF00060">
    <property type="entry name" value="Lig_chan"/>
    <property type="match status" value="1"/>
</dbReference>
<dbReference type="Pfam" id="PF10613">
    <property type="entry name" value="Lig_chan-Glu_bd"/>
    <property type="match status" value="1"/>
</dbReference>
<dbReference type="PRINTS" id="PR00177">
    <property type="entry name" value="NMDARECEPTOR"/>
</dbReference>
<dbReference type="SMART" id="SM00918">
    <property type="entry name" value="Lig_chan-Glu_bd"/>
    <property type="match status" value="1"/>
</dbReference>
<dbReference type="SMART" id="SM00079">
    <property type="entry name" value="PBPe"/>
    <property type="match status" value="1"/>
</dbReference>
<dbReference type="SUPFAM" id="SSF53822">
    <property type="entry name" value="Periplasmic binding protein-like I"/>
    <property type="match status" value="1"/>
</dbReference>
<dbReference type="SUPFAM" id="SSF53850">
    <property type="entry name" value="Periplasmic binding protein-like II"/>
    <property type="match status" value="1"/>
</dbReference>
<proteinExistence type="evidence at protein level"/>
<evidence type="ECO:0000250" key="1">
    <source>
        <dbReference type="UniProtKB" id="Q61626"/>
    </source>
</evidence>
<evidence type="ECO:0000255" key="2"/>
<evidence type="ECO:0000256" key="3">
    <source>
        <dbReference type="SAM" id="MobiDB-lite"/>
    </source>
</evidence>
<evidence type="ECO:0000269" key="4">
    <source>
    </source>
</evidence>
<evidence type="ECO:0000269" key="5">
    <source>
    </source>
</evidence>
<evidence type="ECO:0000269" key="6">
    <source>
    </source>
</evidence>
<evidence type="ECO:0000269" key="7">
    <source>
    </source>
</evidence>
<evidence type="ECO:0000269" key="8">
    <source>
    </source>
</evidence>
<evidence type="ECO:0000269" key="9">
    <source>
    </source>
</evidence>
<evidence type="ECO:0000269" key="10">
    <source>
    </source>
</evidence>
<evidence type="ECO:0000269" key="11">
    <source>
    </source>
</evidence>
<evidence type="ECO:0000305" key="12"/>
<evidence type="ECO:0007829" key="13">
    <source>
        <dbReference type="PDB" id="3OM0"/>
    </source>
</evidence>
<evidence type="ECO:0007829" key="14">
    <source>
        <dbReference type="PDB" id="3OM1"/>
    </source>
</evidence>
<evidence type="ECO:0007829" key="15">
    <source>
        <dbReference type="PDB" id="3QLU"/>
    </source>
</evidence>